<comment type="function">
    <text evidence="1">Catalyzes the transfer of the phosphoribosyl group of 5-phosphorylribose-1-pyrophosphate (PRPP) to anthranilate to yield N-(5'-phosphoribosyl)-anthranilate (PRA).</text>
</comment>
<comment type="catalytic activity">
    <reaction evidence="1">
        <text>N-(5-phospho-beta-D-ribosyl)anthranilate + diphosphate = 5-phospho-alpha-D-ribose 1-diphosphate + anthranilate</text>
        <dbReference type="Rhea" id="RHEA:11768"/>
        <dbReference type="ChEBI" id="CHEBI:16567"/>
        <dbReference type="ChEBI" id="CHEBI:18277"/>
        <dbReference type="ChEBI" id="CHEBI:33019"/>
        <dbReference type="ChEBI" id="CHEBI:58017"/>
        <dbReference type="EC" id="2.4.2.18"/>
    </reaction>
</comment>
<comment type="cofactor">
    <cofactor evidence="1">
        <name>Mg(2+)</name>
        <dbReference type="ChEBI" id="CHEBI:18420"/>
    </cofactor>
    <text evidence="1">Binds 2 magnesium ions per monomer.</text>
</comment>
<comment type="pathway">
    <text evidence="1">Amino-acid biosynthesis; L-tryptophan biosynthesis; L-tryptophan from chorismate: step 2/5.</text>
</comment>
<comment type="subunit">
    <text evidence="1">Homodimer.</text>
</comment>
<comment type="similarity">
    <text evidence="1">Belongs to the anthranilate phosphoribosyltransferase family.</text>
</comment>
<feature type="chain" id="PRO_0000325473" description="Anthranilate phosphoribosyltransferase">
    <location>
        <begin position="1"/>
        <end position="348"/>
    </location>
</feature>
<feature type="binding site" evidence="1">
    <location>
        <position position="87"/>
    </location>
    <ligand>
        <name>5-phospho-alpha-D-ribose 1-diphosphate</name>
        <dbReference type="ChEBI" id="CHEBI:58017"/>
    </ligand>
</feature>
<feature type="binding site" evidence="1">
    <location>
        <position position="87"/>
    </location>
    <ligand>
        <name>anthranilate</name>
        <dbReference type="ChEBI" id="CHEBI:16567"/>
        <label>1</label>
    </ligand>
</feature>
<feature type="binding site" evidence="1">
    <location>
        <begin position="90"/>
        <end position="91"/>
    </location>
    <ligand>
        <name>5-phospho-alpha-D-ribose 1-diphosphate</name>
        <dbReference type="ChEBI" id="CHEBI:58017"/>
    </ligand>
</feature>
<feature type="binding site" evidence="1">
    <location>
        <position position="95"/>
    </location>
    <ligand>
        <name>5-phospho-alpha-D-ribose 1-diphosphate</name>
        <dbReference type="ChEBI" id="CHEBI:58017"/>
    </ligand>
</feature>
<feature type="binding site" evidence="1">
    <location>
        <begin position="97"/>
        <end position="100"/>
    </location>
    <ligand>
        <name>5-phospho-alpha-D-ribose 1-diphosphate</name>
        <dbReference type="ChEBI" id="CHEBI:58017"/>
    </ligand>
</feature>
<feature type="binding site" evidence="1">
    <location>
        <position position="99"/>
    </location>
    <ligand>
        <name>Mg(2+)</name>
        <dbReference type="ChEBI" id="CHEBI:18420"/>
        <label>1</label>
    </ligand>
</feature>
<feature type="binding site" evidence="1">
    <location>
        <begin position="115"/>
        <end position="123"/>
    </location>
    <ligand>
        <name>5-phospho-alpha-D-ribose 1-diphosphate</name>
        <dbReference type="ChEBI" id="CHEBI:58017"/>
    </ligand>
</feature>
<feature type="binding site" evidence="1">
    <location>
        <position position="118"/>
    </location>
    <ligand>
        <name>anthranilate</name>
        <dbReference type="ChEBI" id="CHEBI:16567"/>
        <label>1</label>
    </ligand>
</feature>
<feature type="binding site" evidence="1">
    <location>
        <position position="127"/>
    </location>
    <ligand>
        <name>5-phospho-alpha-D-ribose 1-diphosphate</name>
        <dbReference type="ChEBI" id="CHEBI:58017"/>
    </ligand>
</feature>
<feature type="binding site" evidence="1">
    <location>
        <position position="173"/>
    </location>
    <ligand>
        <name>anthranilate</name>
        <dbReference type="ChEBI" id="CHEBI:16567"/>
        <label>2</label>
    </ligand>
</feature>
<feature type="binding site" evidence="1">
    <location>
        <position position="232"/>
    </location>
    <ligand>
        <name>Mg(2+)</name>
        <dbReference type="ChEBI" id="CHEBI:18420"/>
        <label>2</label>
    </ligand>
</feature>
<feature type="binding site" evidence="1">
    <location>
        <position position="233"/>
    </location>
    <ligand>
        <name>Mg(2+)</name>
        <dbReference type="ChEBI" id="CHEBI:18420"/>
        <label>1</label>
    </ligand>
</feature>
<feature type="binding site" evidence="1">
    <location>
        <position position="233"/>
    </location>
    <ligand>
        <name>Mg(2+)</name>
        <dbReference type="ChEBI" id="CHEBI:18420"/>
        <label>2</label>
    </ligand>
</feature>
<proteinExistence type="inferred from homology"/>
<sequence>MVSSPMSWSKRLDHLLNGGVFSHAEATELMEAWLAEALTPVQTGAFLAALRSRGVDGTELGAMAAVLRQASPLPCERPTLGLVDTCGTGGDGADTFNISTAVAFTAAACGATVAKHGNRSASGKVGSADVLEGLGLHLKAPAAQVVSALPATRVTFLFAPAWHPALVNLAPLRKSLGVRTVFNLLGPLVNPLRPDGQVLGVATDDLLDPMAEALRSLGQDRAVVVHGSGGLDEASLAGPNPVRILEKGQVRSEWIAPEDLGLQQAPLDALRGGDLVRNQTILEELLSGRGSQAQNEVVAFNTALVLWVAGVESDFKQGAQKALAALSQGSPWSRLEQLRAALSPAKEE</sequence>
<protein>
    <recommendedName>
        <fullName evidence="1">Anthranilate phosphoribosyltransferase</fullName>
        <ecNumber evidence="1">2.4.2.18</ecNumber>
    </recommendedName>
</protein>
<name>TRPD_SYNPW</name>
<accession>A5GKM1</accession>
<reference key="1">
    <citation type="submission" date="2006-05" db="EMBL/GenBank/DDBJ databases">
        <authorList>
            <consortium name="Genoscope"/>
        </authorList>
    </citation>
    <scope>NUCLEOTIDE SEQUENCE [LARGE SCALE GENOMIC DNA]</scope>
    <source>
        <strain>WH7803</strain>
    </source>
</reference>
<keyword id="KW-0028">Amino-acid biosynthesis</keyword>
<keyword id="KW-0057">Aromatic amino acid biosynthesis</keyword>
<keyword id="KW-0328">Glycosyltransferase</keyword>
<keyword id="KW-0460">Magnesium</keyword>
<keyword id="KW-0479">Metal-binding</keyword>
<keyword id="KW-1185">Reference proteome</keyword>
<keyword id="KW-0808">Transferase</keyword>
<keyword id="KW-0822">Tryptophan biosynthesis</keyword>
<organism>
    <name type="scientific">Synechococcus sp. (strain WH7803)</name>
    <dbReference type="NCBI Taxonomy" id="32051"/>
    <lineage>
        <taxon>Bacteria</taxon>
        <taxon>Bacillati</taxon>
        <taxon>Cyanobacteriota</taxon>
        <taxon>Cyanophyceae</taxon>
        <taxon>Synechococcales</taxon>
        <taxon>Synechococcaceae</taxon>
        <taxon>Synechococcus</taxon>
    </lineage>
</organism>
<evidence type="ECO:0000255" key="1">
    <source>
        <dbReference type="HAMAP-Rule" id="MF_00211"/>
    </source>
</evidence>
<gene>
    <name evidence="1" type="primary">trpD</name>
    <name type="ordered locus">SynWH7803_1060</name>
</gene>
<dbReference type="EC" id="2.4.2.18" evidence="1"/>
<dbReference type="EMBL" id="CT971583">
    <property type="protein sequence ID" value="CAK23486.1"/>
    <property type="molecule type" value="Genomic_DNA"/>
</dbReference>
<dbReference type="SMR" id="A5GKM1"/>
<dbReference type="STRING" id="32051.SynWH7803_1060"/>
<dbReference type="KEGG" id="syx:SynWH7803_1060"/>
<dbReference type="eggNOG" id="COG0547">
    <property type="taxonomic scope" value="Bacteria"/>
</dbReference>
<dbReference type="HOGENOM" id="CLU_034315_2_1_3"/>
<dbReference type="OrthoDB" id="9806430at2"/>
<dbReference type="UniPathway" id="UPA00035">
    <property type="reaction ID" value="UER00041"/>
</dbReference>
<dbReference type="Proteomes" id="UP000001566">
    <property type="component" value="Chromosome"/>
</dbReference>
<dbReference type="GO" id="GO:0005829">
    <property type="term" value="C:cytosol"/>
    <property type="evidence" value="ECO:0007669"/>
    <property type="project" value="TreeGrafter"/>
</dbReference>
<dbReference type="GO" id="GO:0004048">
    <property type="term" value="F:anthranilate phosphoribosyltransferase activity"/>
    <property type="evidence" value="ECO:0007669"/>
    <property type="project" value="UniProtKB-UniRule"/>
</dbReference>
<dbReference type="GO" id="GO:0000287">
    <property type="term" value="F:magnesium ion binding"/>
    <property type="evidence" value="ECO:0007669"/>
    <property type="project" value="UniProtKB-UniRule"/>
</dbReference>
<dbReference type="GO" id="GO:0000162">
    <property type="term" value="P:L-tryptophan biosynthetic process"/>
    <property type="evidence" value="ECO:0007669"/>
    <property type="project" value="UniProtKB-UniRule"/>
</dbReference>
<dbReference type="FunFam" id="3.40.1030.10:FF:000002">
    <property type="entry name" value="Anthranilate phosphoribosyltransferase"/>
    <property type="match status" value="1"/>
</dbReference>
<dbReference type="Gene3D" id="3.40.1030.10">
    <property type="entry name" value="Nucleoside phosphorylase/phosphoribosyltransferase catalytic domain"/>
    <property type="match status" value="1"/>
</dbReference>
<dbReference type="Gene3D" id="1.20.970.10">
    <property type="entry name" value="Transferase, Pyrimidine Nucleoside Phosphorylase, Chain C"/>
    <property type="match status" value="1"/>
</dbReference>
<dbReference type="HAMAP" id="MF_00211">
    <property type="entry name" value="TrpD"/>
    <property type="match status" value="1"/>
</dbReference>
<dbReference type="InterPro" id="IPR005940">
    <property type="entry name" value="Anthranilate_Pribosyl_Tfrase"/>
</dbReference>
<dbReference type="InterPro" id="IPR000312">
    <property type="entry name" value="Glycosyl_Trfase_fam3"/>
</dbReference>
<dbReference type="InterPro" id="IPR017459">
    <property type="entry name" value="Glycosyl_Trfase_fam3_N_dom"/>
</dbReference>
<dbReference type="InterPro" id="IPR036320">
    <property type="entry name" value="Glycosyl_Trfase_fam3_N_dom_sf"/>
</dbReference>
<dbReference type="InterPro" id="IPR035902">
    <property type="entry name" value="Nuc_phospho_transferase"/>
</dbReference>
<dbReference type="NCBIfam" id="TIGR01245">
    <property type="entry name" value="trpD"/>
    <property type="match status" value="1"/>
</dbReference>
<dbReference type="PANTHER" id="PTHR43285">
    <property type="entry name" value="ANTHRANILATE PHOSPHORIBOSYLTRANSFERASE"/>
    <property type="match status" value="1"/>
</dbReference>
<dbReference type="PANTHER" id="PTHR43285:SF2">
    <property type="entry name" value="ANTHRANILATE PHOSPHORIBOSYLTRANSFERASE"/>
    <property type="match status" value="1"/>
</dbReference>
<dbReference type="Pfam" id="PF02885">
    <property type="entry name" value="Glycos_trans_3N"/>
    <property type="match status" value="1"/>
</dbReference>
<dbReference type="Pfam" id="PF00591">
    <property type="entry name" value="Glycos_transf_3"/>
    <property type="match status" value="1"/>
</dbReference>
<dbReference type="SUPFAM" id="SSF52418">
    <property type="entry name" value="Nucleoside phosphorylase/phosphoribosyltransferase catalytic domain"/>
    <property type="match status" value="1"/>
</dbReference>
<dbReference type="SUPFAM" id="SSF47648">
    <property type="entry name" value="Nucleoside phosphorylase/phosphoribosyltransferase N-terminal domain"/>
    <property type="match status" value="1"/>
</dbReference>